<comment type="subunit">
    <text evidence="1">Homohexamer.</text>
</comment>
<comment type="similarity">
    <text evidence="2">Belongs to the GTP cyclohydrolase I type 2/NIF3 family.</text>
</comment>
<evidence type="ECO:0000250" key="1">
    <source>
        <dbReference type="UniProtKB" id="P0AFP6"/>
    </source>
</evidence>
<evidence type="ECO:0000305" key="2"/>
<dbReference type="EMBL" id="BA000004">
    <property type="protein sequence ID" value="BAB05099.1"/>
    <property type="molecule type" value="Genomic_DNA"/>
</dbReference>
<dbReference type="PIR" id="D83822">
    <property type="entry name" value="D83822"/>
</dbReference>
<dbReference type="RefSeq" id="WP_010897545.1">
    <property type="nucleotide sequence ID" value="NC_002570.2"/>
</dbReference>
<dbReference type="SMR" id="Q9KD39"/>
<dbReference type="STRING" id="272558.gene:10727274"/>
<dbReference type="KEGG" id="bha:BH1380"/>
<dbReference type="eggNOG" id="COG0327">
    <property type="taxonomic scope" value="Bacteria"/>
</dbReference>
<dbReference type="HOGENOM" id="CLU_037423_1_0_9"/>
<dbReference type="OrthoDB" id="9792792at2"/>
<dbReference type="Proteomes" id="UP000001258">
    <property type="component" value="Chromosome"/>
</dbReference>
<dbReference type="GO" id="GO:0005737">
    <property type="term" value="C:cytoplasm"/>
    <property type="evidence" value="ECO:0007669"/>
    <property type="project" value="TreeGrafter"/>
</dbReference>
<dbReference type="GO" id="GO:0046872">
    <property type="term" value="F:metal ion binding"/>
    <property type="evidence" value="ECO:0007669"/>
    <property type="project" value="UniProtKB-KW"/>
</dbReference>
<dbReference type="FunFam" id="3.40.1390.30:FF:000001">
    <property type="entry name" value="GTP cyclohydrolase 1 type 2"/>
    <property type="match status" value="1"/>
</dbReference>
<dbReference type="FunFam" id="3.30.70.120:FF:000006">
    <property type="entry name" value="GTP cyclohydrolase 1 type 2 homolog"/>
    <property type="match status" value="1"/>
</dbReference>
<dbReference type="Gene3D" id="3.30.70.120">
    <property type="match status" value="1"/>
</dbReference>
<dbReference type="Gene3D" id="3.40.1390.30">
    <property type="entry name" value="NIF3 (NGG1p interacting factor 3)-like"/>
    <property type="match status" value="1"/>
</dbReference>
<dbReference type="InterPro" id="IPR002678">
    <property type="entry name" value="DUF34/NIF3"/>
</dbReference>
<dbReference type="InterPro" id="IPR017221">
    <property type="entry name" value="DUF34/NIF3_bac"/>
</dbReference>
<dbReference type="InterPro" id="IPR036069">
    <property type="entry name" value="DUF34/NIF3_sf"/>
</dbReference>
<dbReference type="InterPro" id="IPR015867">
    <property type="entry name" value="N-reg_PII/ATP_PRibTrfase_C"/>
</dbReference>
<dbReference type="NCBIfam" id="TIGR00486">
    <property type="entry name" value="YbgI_SA1388"/>
    <property type="match status" value="1"/>
</dbReference>
<dbReference type="PANTHER" id="PTHR13799:SF14">
    <property type="entry name" value="GTP CYCLOHYDROLASE 1 TYPE 2 HOMOLOG"/>
    <property type="match status" value="1"/>
</dbReference>
<dbReference type="PANTHER" id="PTHR13799">
    <property type="entry name" value="NGG1 INTERACTING FACTOR 3"/>
    <property type="match status" value="1"/>
</dbReference>
<dbReference type="Pfam" id="PF01784">
    <property type="entry name" value="DUF34_NIF3"/>
    <property type="match status" value="1"/>
</dbReference>
<dbReference type="PIRSF" id="PIRSF037489">
    <property type="entry name" value="UCP037489_NIF3_YqfO"/>
    <property type="match status" value="1"/>
</dbReference>
<dbReference type="SUPFAM" id="SSF102705">
    <property type="entry name" value="NIF3 (NGG1p interacting factor 3)-like"/>
    <property type="match status" value="1"/>
</dbReference>
<protein>
    <recommendedName>
        <fullName>GTP cyclohydrolase 1 type 2 homolog</fullName>
    </recommendedName>
</protein>
<keyword id="KW-0479">Metal-binding</keyword>
<keyword id="KW-1185">Reference proteome</keyword>
<proteinExistence type="inferred from homology"/>
<accession>Q9KD39</accession>
<feature type="chain" id="PRO_0000147294" description="GTP cyclohydrolase 1 type 2 homolog">
    <location>
        <begin position="1"/>
        <end position="372"/>
    </location>
</feature>
<feature type="binding site" evidence="1">
    <location>
        <position position="67"/>
    </location>
    <ligand>
        <name>a divalent metal cation</name>
        <dbReference type="ChEBI" id="CHEBI:60240"/>
        <label>1</label>
    </ligand>
</feature>
<feature type="binding site" evidence="1">
    <location>
        <position position="68"/>
    </location>
    <ligand>
        <name>a divalent metal cation</name>
        <dbReference type="ChEBI" id="CHEBI:60240"/>
        <label>2</label>
    </ligand>
</feature>
<feature type="binding site" evidence="1">
    <location>
        <position position="106"/>
    </location>
    <ligand>
        <name>a divalent metal cation</name>
        <dbReference type="ChEBI" id="CHEBI:60240"/>
        <label>1</label>
    </ligand>
</feature>
<feature type="binding site" evidence="1">
    <location>
        <position position="332"/>
    </location>
    <ligand>
        <name>a divalent metal cation</name>
        <dbReference type="ChEBI" id="CHEBI:60240"/>
        <label>2</label>
    </ligand>
</feature>
<feature type="binding site" evidence="1">
    <location>
        <position position="335"/>
    </location>
    <ligand>
        <name>a divalent metal cation</name>
        <dbReference type="ChEBI" id="CHEBI:60240"/>
        <label>1</label>
    </ligand>
</feature>
<feature type="binding site" evidence="1">
    <location>
        <position position="335"/>
    </location>
    <ligand>
        <name>a divalent metal cation</name>
        <dbReference type="ChEBI" id="CHEBI:60240"/>
        <label>2</label>
    </ligand>
</feature>
<organism>
    <name type="scientific">Halalkalibacterium halodurans (strain ATCC BAA-125 / DSM 18197 / FERM 7344 / JCM 9153 / C-125)</name>
    <name type="common">Bacillus halodurans</name>
    <dbReference type="NCBI Taxonomy" id="272558"/>
    <lineage>
        <taxon>Bacteria</taxon>
        <taxon>Bacillati</taxon>
        <taxon>Bacillota</taxon>
        <taxon>Bacilli</taxon>
        <taxon>Bacillales</taxon>
        <taxon>Bacillaceae</taxon>
        <taxon>Halalkalibacterium (ex Joshi et al. 2022)</taxon>
    </lineage>
</organism>
<name>GCH1L_HALH5</name>
<sequence length="372" mass="40813">MKIANGQTVIQLFERWSPKSLAVEGDKNGVLIGTLNKPIQRVLTALDVTESVIDEAIELGAELILAHHPIIFRPLSSIRTDTAYGRIIEKAIKHDLTIYAAHTNLDITKGGVNDLMADALGLKDIEVLAPTTTESLYKLVVFVPHTHTDQVREALGRAGAGHIGNYSYCTFNSKGTGTFKPEEGTNPFIGKQGALEFVEELKIETIVTEGQKNKVVAAMIKSHPYEEPAYDLYPLANEGETLGLGRIGYLHESMTLEEFAKQVKKAFDVPTARVVGSLETQIRKVAVLGGDGNKYMAHALRKGADVIVTGDVYYHVPHDALMDGLNIVDPGHNVEKIMKQGVKEKLEKLLKDKKYDTEVVASSVHTDPFTFI</sequence>
<reference key="1">
    <citation type="journal article" date="2000" name="Nucleic Acids Res.">
        <title>Complete genome sequence of the alkaliphilic bacterium Bacillus halodurans and genomic sequence comparison with Bacillus subtilis.</title>
        <authorList>
            <person name="Takami H."/>
            <person name="Nakasone K."/>
            <person name="Takaki Y."/>
            <person name="Maeno G."/>
            <person name="Sasaki R."/>
            <person name="Masui N."/>
            <person name="Fuji F."/>
            <person name="Hirama C."/>
            <person name="Nakamura Y."/>
            <person name="Ogasawara N."/>
            <person name="Kuhara S."/>
            <person name="Horikoshi K."/>
        </authorList>
    </citation>
    <scope>NUCLEOTIDE SEQUENCE [LARGE SCALE GENOMIC DNA]</scope>
    <source>
        <strain>ATCC BAA-125 / DSM 18197 / FERM 7344 / JCM 9153 / C-125</strain>
    </source>
</reference>
<gene>
    <name type="ordered locus">BH1380</name>
</gene>